<evidence type="ECO:0000250" key="1"/>
<evidence type="ECO:0000255" key="2"/>
<evidence type="ECO:0000305" key="3"/>
<proteinExistence type="inferred from homology"/>
<comment type="subcellular location">
    <subcellularLocation>
        <location evidence="1">Secreted</location>
    </subcellularLocation>
</comment>
<comment type="similarity">
    <text evidence="3">Belongs to the DEFL family.</text>
</comment>
<name>DF201_ARATH</name>
<accession>Q2V4N2</accession>
<feature type="signal peptide" evidence="2">
    <location>
        <begin position="1"/>
        <end position="22"/>
    </location>
</feature>
<feature type="chain" id="PRO_0000379693" description="Defensin-like protein 201">
    <location>
        <begin position="23"/>
        <end position="78"/>
    </location>
</feature>
<feature type="disulfide bond" evidence="1">
    <location>
        <begin position="32"/>
        <end position="78"/>
    </location>
</feature>
<feature type="disulfide bond" evidence="1">
    <location>
        <begin position="41"/>
        <end position="61"/>
    </location>
</feature>
<feature type="disulfide bond" evidence="1">
    <location>
        <begin position="46"/>
        <end position="71"/>
    </location>
</feature>
<feature type="disulfide bond" evidence="1">
    <location>
        <begin position="50"/>
        <end position="73"/>
    </location>
</feature>
<reference key="1">
    <citation type="journal article" date="2000" name="Nature">
        <title>Sequence and analysis of chromosome 1 of the plant Arabidopsis thaliana.</title>
        <authorList>
            <person name="Theologis A."/>
            <person name="Ecker J.R."/>
            <person name="Palm C.J."/>
            <person name="Federspiel N.A."/>
            <person name="Kaul S."/>
            <person name="White O."/>
            <person name="Alonso J."/>
            <person name="Altafi H."/>
            <person name="Araujo R."/>
            <person name="Bowman C.L."/>
            <person name="Brooks S.Y."/>
            <person name="Buehler E."/>
            <person name="Chan A."/>
            <person name="Chao Q."/>
            <person name="Chen H."/>
            <person name="Cheuk R.F."/>
            <person name="Chin C.W."/>
            <person name="Chung M.K."/>
            <person name="Conn L."/>
            <person name="Conway A.B."/>
            <person name="Conway A.R."/>
            <person name="Creasy T.H."/>
            <person name="Dewar K."/>
            <person name="Dunn P."/>
            <person name="Etgu P."/>
            <person name="Feldblyum T.V."/>
            <person name="Feng J.-D."/>
            <person name="Fong B."/>
            <person name="Fujii C.Y."/>
            <person name="Gill J.E."/>
            <person name="Goldsmith A.D."/>
            <person name="Haas B."/>
            <person name="Hansen N.F."/>
            <person name="Hughes B."/>
            <person name="Huizar L."/>
            <person name="Hunter J.L."/>
            <person name="Jenkins J."/>
            <person name="Johnson-Hopson C."/>
            <person name="Khan S."/>
            <person name="Khaykin E."/>
            <person name="Kim C.J."/>
            <person name="Koo H.L."/>
            <person name="Kremenetskaia I."/>
            <person name="Kurtz D.B."/>
            <person name="Kwan A."/>
            <person name="Lam B."/>
            <person name="Langin-Hooper S."/>
            <person name="Lee A."/>
            <person name="Lee J.M."/>
            <person name="Lenz C.A."/>
            <person name="Li J.H."/>
            <person name="Li Y.-P."/>
            <person name="Lin X."/>
            <person name="Liu S.X."/>
            <person name="Liu Z.A."/>
            <person name="Luros J.S."/>
            <person name="Maiti R."/>
            <person name="Marziali A."/>
            <person name="Militscher J."/>
            <person name="Miranda M."/>
            <person name="Nguyen M."/>
            <person name="Nierman W.C."/>
            <person name="Osborne B.I."/>
            <person name="Pai G."/>
            <person name="Peterson J."/>
            <person name="Pham P.K."/>
            <person name="Rizzo M."/>
            <person name="Rooney T."/>
            <person name="Rowley D."/>
            <person name="Sakano H."/>
            <person name="Salzberg S.L."/>
            <person name="Schwartz J.R."/>
            <person name="Shinn P."/>
            <person name="Southwick A.M."/>
            <person name="Sun H."/>
            <person name="Tallon L.J."/>
            <person name="Tambunga G."/>
            <person name="Toriumi M.J."/>
            <person name="Town C.D."/>
            <person name="Utterback T."/>
            <person name="Van Aken S."/>
            <person name="Vaysberg M."/>
            <person name="Vysotskaia V.S."/>
            <person name="Walker M."/>
            <person name="Wu D."/>
            <person name="Yu G."/>
            <person name="Fraser C.M."/>
            <person name="Venter J.C."/>
            <person name="Davis R.W."/>
        </authorList>
    </citation>
    <scope>NUCLEOTIDE SEQUENCE [LARGE SCALE GENOMIC DNA]</scope>
    <source>
        <strain>cv. Columbia</strain>
    </source>
</reference>
<reference key="2">
    <citation type="journal article" date="2017" name="Plant J.">
        <title>Araport11: a complete reannotation of the Arabidopsis thaliana reference genome.</title>
        <authorList>
            <person name="Cheng C.Y."/>
            <person name="Krishnakumar V."/>
            <person name="Chan A.P."/>
            <person name="Thibaud-Nissen F."/>
            <person name="Schobel S."/>
            <person name="Town C.D."/>
        </authorList>
    </citation>
    <scope>GENOME REANNOTATION</scope>
    <source>
        <strain>cv. Columbia</strain>
    </source>
</reference>
<reference key="3">
    <citation type="journal article" date="2006" name="Plant Biotechnol. J.">
        <title>Simultaneous high-throughput recombinational cloning of open reading frames in closed and open configurations.</title>
        <authorList>
            <person name="Underwood B.A."/>
            <person name="Vanderhaeghen R."/>
            <person name="Whitford R."/>
            <person name="Town C.D."/>
            <person name="Hilson P."/>
        </authorList>
    </citation>
    <scope>NUCLEOTIDE SEQUENCE [LARGE SCALE MRNA]</scope>
    <source>
        <strain>cv. Columbia</strain>
    </source>
</reference>
<reference key="4">
    <citation type="journal article" date="2007" name="Plant J.">
        <title>Small cysteine-rich peptides resembling antimicrobial peptides have been under-predicted in plants.</title>
        <authorList>
            <person name="Silverstein K.A.T."/>
            <person name="Moskal W.A. Jr."/>
            <person name="Wu H.C."/>
            <person name="Underwood B.A."/>
            <person name="Graham M.A."/>
            <person name="Town C.D."/>
            <person name="VandenBosch K.A."/>
        </authorList>
    </citation>
    <scope>NUCLEOTIDE SEQUENCE [LARGE SCALE MRNA]</scope>
    <source>
        <strain>cv. Columbia</strain>
    </source>
</reference>
<reference key="5">
    <citation type="journal article" date="2005" name="Plant Physiol.">
        <title>Genome organization of more than 300 defensin-like genes in Arabidopsis.</title>
        <authorList>
            <person name="Silverstein K.A.T."/>
            <person name="Graham M.A."/>
            <person name="Paape T.D."/>
            <person name="VandenBosch K.A."/>
        </authorList>
    </citation>
    <scope>GENE FAMILY</scope>
</reference>
<protein>
    <recommendedName>
        <fullName>Defensin-like protein 201</fullName>
    </recommendedName>
</protein>
<dbReference type="EMBL" id="AC006917">
    <property type="status" value="NOT_ANNOTATED_CDS"/>
    <property type="molecule type" value="Genomic_DNA"/>
</dbReference>
<dbReference type="EMBL" id="CP002684">
    <property type="protein sequence ID" value="AEE29219.1"/>
    <property type="molecule type" value="Genomic_DNA"/>
</dbReference>
<dbReference type="EMBL" id="DQ912191">
    <property type="protein sequence ID" value="ABI34010.1"/>
    <property type="molecule type" value="mRNA"/>
</dbReference>
<dbReference type="EMBL" id="EF182780">
    <property type="status" value="NOT_ANNOTATED_CDS"/>
    <property type="molecule type" value="mRNA"/>
</dbReference>
<dbReference type="RefSeq" id="NP_001031047.1">
    <property type="nucleotide sequence ID" value="NM_001035970.4"/>
</dbReference>
<dbReference type="PaxDb" id="3702-AT1G14755.1"/>
<dbReference type="ProteomicsDB" id="224188"/>
<dbReference type="EnsemblPlants" id="AT1G14755.1">
    <property type="protein sequence ID" value="AT1G14755.1"/>
    <property type="gene ID" value="AT1G14755"/>
</dbReference>
<dbReference type="GeneID" id="3766729"/>
<dbReference type="Gramene" id="AT1G14755.1">
    <property type="protein sequence ID" value="AT1G14755.1"/>
    <property type="gene ID" value="AT1G14755"/>
</dbReference>
<dbReference type="KEGG" id="ath:AT1G14755"/>
<dbReference type="Araport" id="AT1G14755"/>
<dbReference type="TAIR" id="AT1G14755"/>
<dbReference type="HOGENOM" id="CLU_2625319_0_0_1"/>
<dbReference type="InParanoid" id="Q2V4N2"/>
<dbReference type="OMA" id="PMVPCDA"/>
<dbReference type="OrthoDB" id="1020715at2759"/>
<dbReference type="PRO" id="PR:Q2V4N2"/>
<dbReference type="Proteomes" id="UP000006548">
    <property type="component" value="Chromosome 1"/>
</dbReference>
<dbReference type="ExpressionAtlas" id="Q2V4N2">
    <property type="expression patterns" value="baseline and differential"/>
</dbReference>
<dbReference type="GO" id="GO:0005576">
    <property type="term" value="C:extracellular region"/>
    <property type="evidence" value="ECO:0007669"/>
    <property type="project" value="UniProtKB-SubCell"/>
</dbReference>
<dbReference type="GO" id="GO:0050832">
    <property type="term" value="P:defense response to fungus"/>
    <property type="evidence" value="ECO:0007669"/>
    <property type="project" value="UniProtKB-KW"/>
</dbReference>
<dbReference type="GO" id="GO:0031640">
    <property type="term" value="P:killing of cells of another organism"/>
    <property type="evidence" value="ECO:0007669"/>
    <property type="project" value="UniProtKB-KW"/>
</dbReference>
<organism>
    <name type="scientific">Arabidopsis thaliana</name>
    <name type="common">Mouse-ear cress</name>
    <dbReference type="NCBI Taxonomy" id="3702"/>
    <lineage>
        <taxon>Eukaryota</taxon>
        <taxon>Viridiplantae</taxon>
        <taxon>Streptophyta</taxon>
        <taxon>Embryophyta</taxon>
        <taxon>Tracheophyta</taxon>
        <taxon>Spermatophyta</taxon>
        <taxon>Magnoliopsida</taxon>
        <taxon>eudicotyledons</taxon>
        <taxon>Gunneridae</taxon>
        <taxon>Pentapetalae</taxon>
        <taxon>rosids</taxon>
        <taxon>malvids</taxon>
        <taxon>Brassicales</taxon>
        <taxon>Brassicaceae</taxon>
        <taxon>Camelineae</taxon>
        <taxon>Arabidopsis</taxon>
    </lineage>
</organism>
<keyword id="KW-0929">Antimicrobial</keyword>
<keyword id="KW-1015">Disulfide bond</keyword>
<keyword id="KW-0295">Fungicide</keyword>
<keyword id="KW-0611">Plant defense</keyword>
<keyword id="KW-1185">Reference proteome</keyword>
<keyword id="KW-0964">Secreted</keyword>
<keyword id="KW-0732">Signal</keyword>
<sequence length="78" mass="8751">MRNLINFAVLIMTIFIVSASGARETRMMEQTCPVFWPMVPCDANKCEQMCRDYYGSVPSYCNRIGTPIAECACSLTPC</sequence>
<gene>
    <name type="ordered locus">At1g14755</name>
    <name type="ORF">F10B6</name>
</gene>